<sequence>MSDKPLPSSFDDDPDFFQDNAWKKLGRRLKEEPLVPLGIGATCYALFRAYRSMKMGDSVQVNRMFRARIYAQAFTLLAVCAGSVYYKTERDQRKQLEKAMDLKKQQAKRDAWLKELEIREQEDKDWQSRHATIEQAAKGVEVKPFVADSAPDAAGRDASEEPAKESGDKKDGGSGGVLSAVKNLSWGSK</sequence>
<reference key="1">
    <citation type="journal article" date="2011" name="Genome Biol.">
        <title>Comparative and functional genomics provide insights into the pathogenicity of dermatophytic fungi.</title>
        <authorList>
            <person name="Burmester A."/>
            <person name="Shelest E."/>
            <person name="Gloeckner G."/>
            <person name="Heddergott C."/>
            <person name="Schindler S."/>
            <person name="Staib P."/>
            <person name="Heidel A."/>
            <person name="Felder M."/>
            <person name="Petzold A."/>
            <person name="Szafranski K."/>
            <person name="Feuermann M."/>
            <person name="Pedruzzi I."/>
            <person name="Priebe S."/>
            <person name="Groth M."/>
            <person name="Winkler R."/>
            <person name="Li W."/>
            <person name="Kniemeyer O."/>
            <person name="Schroeckh V."/>
            <person name="Hertweck C."/>
            <person name="Hube B."/>
            <person name="White T.C."/>
            <person name="Platzer M."/>
            <person name="Guthke R."/>
            <person name="Heitman J."/>
            <person name="Woestemeyer J."/>
            <person name="Zipfel P.F."/>
            <person name="Monod M."/>
            <person name="Brakhage A.A."/>
        </authorList>
    </citation>
    <scope>NUCLEOTIDE SEQUENCE [LARGE SCALE GENOMIC DNA]</scope>
    <source>
        <strain>HKI 0517</strain>
    </source>
</reference>
<organism>
    <name type="scientific">Trichophyton verrucosum (strain HKI 0517)</name>
    <dbReference type="NCBI Taxonomy" id="663202"/>
    <lineage>
        <taxon>Eukaryota</taxon>
        <taxon>Fungi</taxon>
        <taxon>Dikarya</taxon>
        <taxon>Ascomycota</taxon>
        <taxon>Pezizomycotina</taxon>
        <taxon>Eurotiomycetes</taxon>
        <taxon>Eurotiomycetidae</taxon>
        <taxon>Onygenales</taxon>
        <taxon>Arthrodermataceae</taxon>
        <taxon>Trichophyton</taxon>
    </lineage>
</organism>
<evidence type="ECO:0000250" key="1"/>
<evidence type="ECO:0000255" key="2"/>
<evidence type="ECO:0000255" key="3">
    <source>
        <dbReference type="PROSITE-ProRule" id="PRU00836"/>
    </source>
</evidence>
<evidence type="ECO:0000256" key="4">
    <source>
        <dbReference type="SAM" id="MobiDB-lite"/>
    </source>
</evidence>
<evidence type="ECO:0000305" key="5"/>
<accession>D4DDK2</accession>
<protein>
    <recommendedName>
        <fullName>Respiratory supercomplex factor 1, mitochondrial</fullName>
    </recommendedName>
</protein>
<proteinExistence type="inferred from homology"/>
<dbReference type="EMBL" id="ACYE01000266">
    <property type="protein sequence ID" value="EFE40069.1"/>
    <property type="molecule type" value="Genomic_DNA"/>
</dbReference>
<dbReference type="RefSeq" id="XP_003020687.1">
    <property type="nucleotide sequence ID" value="XM_003020641.1"/>
</dbReference>
<dbReference type="GeneID" id="9577386"/>
<dbReference type="KEGG" id="tve:TRV_05213"/>
<dbReference type="HOGENOM" id="CLU_087356_0_2_1"/>
<dbReference type="OrthoDB" id="5793at34384"/>
<dbReference type="Proteomes" id="UP000008383">
    <property type="component" value="Unassembled WGS sequence"/>
</dbReference>
<dbReference type="GO" id="GO:0031966">
    <property type="term" value="C:mitochondrial membrane"/>
    <property type="evidence" value="ECO:0007669"/>
    <property type="project" value="UniProtKB-SubCell"/>
</dbReference>
<dbReference type="GO" id="GO:0097250">
    <property type="term" value="P:mitochondrial respirasome assembly"/>
    <property type="evidence" value="ECO:0007669"/>
    <property type="project" value="TreeGrafter"/>
</dbReference>
<dbReference type="Gene3D" id="6.10.140.1320">
    <property type="match status" value="1"/>
</dbReference>
<dbReference type="InterPro" id="IPR007667">
    <property type="entry name" value="Hypoxia_induced_domain"/>
</dbReference>
<dbReference type="InterPro" id="IPR050355">
    <property type="entry name" value="RCF1"/>
</dbReference>
<dbReference type="PANTHER" id="PTHR12297:SF3">
    <property type="entry name" value="HIG1 DOMAIN FAMILY MEMBER 1A"/>
    <property type="match status" value="1"/>
</dbReference>
<dbReference type="PANTHER" id="PTHR12297">
    <property type="entry name" value="HYPOXIA-INDUCBILE GENE 1 HIG1 -RELATED"/>
    <property type="match status" value="1"/>
</dbReference>
<dbReference type="Pfam" id="PF04588">
    <property type="entry name" value="HIG_1_N"/>
    <property type="match status" value="1"/>
</dbReference>
<dbReference type="PROSITE" id="PS51503">
    <property type="entry name" value="HIG1"/>
    <property type="match status" value="1"/>
</dbReference>
<feature type="chain" id="PRO_0000399661" description="Respiratory supercomplex factor 1, mitochondrial">
    <location>
        <begin position="1"/>
        <end position="189"/>
    </location>
</feature>
<feature type="transmembrane region" description="Helical" evidence="3">
    <location>
        <begin position="33"/>
        <end position="49"/>
    </location>
</feature>
<feature type="transmembrane region" description="Helical" evidence="3">
    <location>
        <begin position="64"/>
        <end position="86"/>
    </location>
</feature>
<feature type="domain" description="HIG1" evidence="3">
    <location>
        <begin position="6"/>
        <end position="97"/>
    </location>
</feature>
<feature type="region of interest" description="Disordered" evidence="4">
    <location>
        <begin position="142"/>
        <end position="189"/>
    </location>
</feature>
<feature type="coiled-coil region" evidence="2">
    <location>
        <begin position="86"/>
        <end position="122"/>
    </location>
</feature>
<feature type="compositionally biased region" description="Basic and acidic residues" evidence="4">
    <location>
        <begin position="154"/>
        <end position="172"/>
    </location>
</feature>
<keyword id="KW-0175">Coiled coil</keyword>
<keyword id="KW-0472">Membrane</keyword>
<keyword id="KW-0496">Mitochondrion</keyword>
<keyword id="KW-0812">Transmembrane</keyword>
<keyword id="KW-1133">Transmembrane helix</keyword>
<gene>
    <name type="primary">RCF1</name>
    <name type="synonym">AIM31</name>
    <name type="ORF">TRV_05213</name>
</gene>
<comment type="function">
    <text evidence="1">Cytochrome c oxidase subunit which plays a role in assembly of respiratory supercomplexes.</text>
</comment>
<comment type="subunit">
    <text evidence="1">Associates with the respiratory chain complex III/complex IV supercomplex.</text>
</comment>
<comment type="subcellular location">
    <subcellularLocation>
        <location evidence="3">Mitochondrion membrane</location>
        <topology evidence="3">Multi-pass membrane protein</topology>
    </subcellularLocation>
</comment>
<comment type="similarity">
    <text evidence="5">Belongs to the RCF1 family.</text>
</comment>
<name>RCF1_TRIVH</name>